<accession>Q0DBL6</accession>
<accession>Q5Z9D6</accession>
<evidence type="ECO:0000250" key="1"/>
<evidence type="ECO:0000255" key="2"/>
<evidence type="ECO:0000256" key="3">
    <source>
        <dbReference type="SAM" id="MobiDB-lite"/>
    </source>
</evidence>
<evidence type="ECO:0000305" key="4"/>
<keyword id="KW-0238">DNA-binding</keyword>
<keyword id="KW-0539">Nucleus</keyword>
<keyword id="KW-0597">Phosphoprotein</keyword>
<keyword id="KW-1185">Reference proteome</keyword>
<keyword id="KW-0346">Stress response</keyword>
<keyword id="KW-0804">Transcription</keyword>
<keyword id="KW-0805">Transcription regulation</keyword>
<dbReference type="EMBL" id="AP003682">
    <property type="protein sequence ID" value="BAD53671.1"/>
    <property type="status" value="ALT_SEQ"/>
    <property type="molecule type" value="Genomic_DNA"/>
</dbReference>
<dbReference type="EMBL" id="AP008212">
    <property type="protein sequence ID" value="BAF19757.2"/>
    <property type="status" value="ALT_SEQ"/>
    <property type="molecule type" value="Genomic_DNA"/>
</dbReference>
<dbReference type="EMBL" id="AP014962">
    <property type="status" value="NOT_ANNOTATED_CDS"/>
    <property type="molecule type" value="Genomic_DNA"/>
</dbReference>
<dbReference type="RefSeq" id="XP_015641665.1">
    <property type="nucleotide sequence ID" value="XM_015786179.1"/>
</dbReference>
<dbReference type="SMR" id="Q0DBL6"/>
<dbReference type="FunCoup" id="Q0DBL6">
    <property type="interactions" value="21"/>
</dbReference>
<dbReference type="STRING" id="39947.Q0DBL6"/>
<dbReference type="PaxDb" id="39947-Q0DBL6"/>
<dbReference type="KEGG" id="dosa:Os06g0553100"/>
<dbReference type="InParanoid" id="Q0DBL6"/>
<dbReference type="OrthoDB" id="60033at2759"/>
<dbReference type="Proteomes" id="UP000000763">
    <property type="component" value="Chromosome 6"/>
</dbReference>
<dbReference type="Proteomes" id="UP000059680">
    <property type="component" value="Chromosome 6"/>
</dbReference>
<dbReference type="GO" id="GO:0005634">
    <property type="term" value="C:nucleus"/>
    <property type="evidence" value="ECO:0000318"/>
    <property type="project" value="GO_Central"/>
</dbReference>
<dbReference type="GO" id="GO:0003700">
    <property type="term" value="F:DNA-binding transcription factor activity"/>
    <property type="evidence" value="ECO:0000318"/>
    <property type="project" value="GO_Central"/>
</dbReference>
<dbReference type="GO" id="GO:0043565">
    <property type="term" value="F:sequence-specific DNA binding"/>
    <property type="evidence" value="ECO:0007669"/>
    <property type="project" value="InterPro"/>
</dbReference>
<dbReference type="GO" id="GO:0034605">
    <property type="term" value="P:cellular response to heat"/>
    <property type="evidence" value="ECO:0000318"/>
    <property type="project" value="GO_Central"/>
</dbReference>
<dbReference type="GO" id="GO:0006357">
    <property type="term" value="P:regulation of transcription by RNA polymerase II"/>
    <property type="evidence" value="ECO:0000318"/>
    <property type="project" value="GO_Central"/>
</dbReference>
<dbReference type="FunFam" id="1.10.10.10:FF:000037">
    <property type="entry name" value="Heat stress transcription factor B-4"/>
    <property type="match status" value="1"/>
</dbReference>
<dbReference type="Gene3D" id="1.10.10.10">
    <property type="entry name" value="Winged helix-like DNA-binding domain superfamily/Winged helix DNA-binding domain"/>
    <property type="match status" value="1"/>
</dbReference>
<dbReference type="InterPro" id="IPR000232">
    <property type="entry name" value="HSF_DNA-bd"/>
</dbReference>
<dbReference type="InterPro" id="IPR036388">
    <property type="entry name" value="WH-like_DNA-bd_sf"/>
</dbReference>
<dbReference type="InterPro" id="IPR036390">
    <property type="entry name" value="WH_DNA-bd_sf"/>
</dbReference>
<dbReference type="PANTHER" id="PTHR10015">
    <property type="entry name" value="HEAT SHOCK TRANSCRIPTION FACTOR"/>
    <property type="match status" value="1"/>
</dbReference>
<dbReference type="PANTHER" id="PTHR10015:SF331">
    <property type="entry name" value="HEAT STRESS TRANSCRIPTION FACTOR C-2B"/>
    <property type="match status" value="1"/>
</dbReference>
<dbReference type="Pfam" id="PF00447">
    <property type="entry name" value="HSF_DNA-bind"/>
    <property type="match status" value="1"/>
</dbReference>
<dbReference type="PRINTS" id="PR00056">
    <property type="entry name" value="HSFDOMAIN"/>
</dbReference>
<dbReference type="SMART" id="SM00415">
    <property type="entry name" value="HSF"/>
    <property type="match status" value="1"/>
</dbReference>
<dbReference type="SUPFAM" id="SSF46785">
    <property type="entry name" value="Winged helix' DNA-binding domain"/>
    <property type="match status" value="1"/>
</dbReference>
<dbReference type="PROSITE" id="PS00434">
    <property type="entry name" value="HSF_DOMAIN"/>
    <property type="match status" value="1"/>
</dbReference>
<organism>
    <name type="scientific">Oryza sativa subsp. japonica</name>
    <name type="common">Rice</name>
    <dbReference type="NCBI Taxonomy" id="39947"/>
    <lineage>
        <taxon>Eukaryota</taxon>
        <taxon>Viridiplantae</taxon>
        <taxon>Streptophyta</taxon>
        <taxon>Embryophyta</taxon>
        <taxon>Tracheophyta</taxon>
        <taxon>Spermatophyta</taxon>
        <taxon>Magnoliopsida</taxon>
        <taxon>Liliopsida</taxon>
        <taxon>Poales</taxon>
        <taxon>Poaceae</taxon>
        <taxon>BOP clade</taxon>
        <taxon>Oryzoideae</taxon>
        <taxon>Oryzeae</taxon>
        <taxon>Oryzinae</taxon>
        <taxon>Oryza</taxon>
        <taxon>Oryza sativa</taxon>
    </lineage>
</organism>
<comment type="function">
    <text evidence="1">Transcriptional regulator that specifically binds DNA of heat shock promoter elements (HSE).</text>
</comment>
<comment type="subunit">
    <text evidence="1">Homotrimer.</text>
</comment>
<comment type="subcellular location">
    <subcellularLocation>
        <location evidence="4">Nucleus</location>
    </subcellularLocation>
</comment>
<comment type="domain">
    <text>The hydrophobic-rich region (HR-A/B) corresponds to the oligomerization domain.</text>
</comment>
<comment type="PTM">
    <text evidence="1">Exhibits temperature-dependent phosphorylation.</text>
</comment>
<comment type="similarity">
    <text evidence="4">Belongs to the HSF family. Class C subfamily.</text>
</comment>
<comment type="sequence caution" evidence="4">
    <conflict type="erroneous gene model prediction">
        <sequence resource="EMBL-CDS" id="BAD53671"/>
    </conflict>
</comment>
<comment type="sequence caution" evidence="4">
    <conflict type="erroneous gene model prediction">
        <sequence resource="EMBL-CDS" id="BAF19757"/>
    </conflict>
</comment>
<name>HFC2B_ORYSJ</name>
<gene>
    <name type="primary">HSFC2B</name>
    <name type="synonym">HSF16</name>
    <name type="ordered locus">Os06g0553100</name>
    <name type="ordered locus">LOC_Os06g35960</name>
    <name type="ORF">P0427B07.22</name>
</gene>
<protein>
    <recommendedName>
        <fullName>Heat stress transcription factor C-2b</fullName>
    </recommendedName>
    <alternativeName>
        <fullName>Heat stress transcription factor 16</fullName>
        <shortName>OsHsf-16</shortName>
    </alternativeName>
</protein>
<reference key="1">
    <citation type="journal article" date="2005" name="Nature">
        <title>The map-based sequence of the rice genome.</title>
        <authorList>
            <consortium name="International rice genome sequencing project (IRGSP)"/>
        </authorList>
    </citation>
    <scope>NUCLEOTIDE SEQUENCE [LARGE SCALE GENOMIC DNA]</scope>
    <source>
        <strain>cv. Nipponbare</strain>
    </source>
</reference>
<reference key="2">
    <citation type="journal article" date="2008" name="Nucleic Acids Res.">
        <title>The rice annotation project database (RAP-DB): 2008 update.</title>
        <authorList>
            <consortium name="The rice annotation project (RAP)"/>
        </authorList>
    </citation>
    <scope>GENOME REANNOTATION</scope>
    <source>
        <strain>cv. Nipponbare</strain>
    </source>
</reference>
<reference key="3">
    <citation type="journal article" date="2013" name="Rice">
        <title>Improvement of the Oryza sativa Nipponbare reference genome using next generation sequence and optical map data.</title>
        <authorList>
            <person name="Kawahara Y."/>
            <person name="de la Bastide M."/>
            <person name="Hamilton J.P."/>
            <person name="Kanamori H."/>
            <person name="McCombie W.R."/>
            <person name="Ouyang S."/>
            <person name="Schwartz D.C."/>
            <person name="Tanaka T."/>
            <person name="Wu J."/>
            <person name="Zhou S."/>
            <person name="Childs K.L."/>
            <person name="Davidson R.M."/>
            <person name="Lin H."/>
            <person name="Quesada-Ocampo L."/>
            <person name="Vaillancourt B."/>
            <person name="Sakai H."/>
            <person name="Lee S.S."/>
            <person name="Kim J."/>
            <person name="Numa H."/>
            <person name="Itoh T."/>
            <person name="Buell C.R."/>
            <person name="Matsumoto T."/>
        </authorList>
    </citation>
    <scope>GENOME REANNOTATION</scope>
    <source>
        <strain>cv. Nipponbare</strain>
    </source>
</reference>
<reference key="4">
    <citation type="journal article" date="2004" name="J. Biosci.">
        <title>Heat stress response in plants: a complex game with chaperones and more than twenty heat stress transcription factors.</title>
        <authorList>
            <person name="Baniwal S.K."/>
            <person name="Bharti K."/>
            <person name="Chan K.Y."/>
            <person name="Fauth M."/>
            <person name="Ganguli A."/>
            <person name="Kotak S."/>
            <person name="Mishra S.K."/>
            <person name="Nover L."/>
            <person name="Port M."/>
            <person name="Scharf K.-D."/>
            <person name="Tripp J."/>
            <person name="Weber C."/>
            <person name="Zielinski D."/>
            <person name="von Koskull-Doering P."/>
        </authorList>
    </citation>
    <scope>GENE FAMILY</scope>
    <scope>NOMENCLATURE</scope>
</reference>
<reference key="5">
    <citation type="journal article" date="2008" name="J. Genet. Genomics">
        <title>Genome-wide analysis of heat shock transcription factor families in rice and Arabidopsis.</title>
        <authorList>
            <person name="Guo J."/>
            <person name="Wu J."/>
            <person name="Ji Q."/>
            <person name="Wang C."/>
            <person name="Luo L."/>
            <person name="Yuan Y."/>
            <person name="Wang Y."/>
            <person name="Wang J."/>
        </authorList>
    </citation>
    <scope>GENE FAMILY</scope>
    <scope>NOMENCLATURE</scope>
</reference>
<feature type="chain" id="PRO_0000350844" description="Heat stress transcription factor C-2b">
    <location>
        <begin position="1"/>
        <end position="278"/>
    </location>
</feature>
<feature type="region of interest" description="Disordered" evidence="3">
    <location>
        <begin position="105"/>
        <end position="132"/>
    </location>
</feature>
<feature type="region of interest" description="Hydrophobic repeat HR-A/B">
    <location>
        <begin position="143"/>
        <end position="179"/>
    </location>
</feature>
<feature type="short sequence motif" description="Nuclear localization signal" evidence="2">
    <location>
        <begin position="219"/>
        <end position="222"/>
    </location>
</feature>
<feature type="compositionally biased region" description="Gly residues" evidence="3">
    <location>
        <begin position="105"/>
        <end position="114"/>
    </location>
</feature>
<proteinExistence type="inferred from homology"/>
<sequence>MAAAAGGGAAPFVWKTYRMVEDPGTDGVIGWGKGNNSFVVADPFVFSQTLLPAHFKHNNFSSFVRQLNTYGFRKVDPDRWEFAHASFLRGQTHLLRNIVRRGSAAAGGGGGGGGGKRRDASADGGGGGGDEDMTMVATEVVRLKQEQRTIDDRVAAMWRRVQETERRPKQMLAFLLKVVGDRDKLHRLVGGGGNGNGAATAAAADNGFADAARAGCGEKRARLLLDGDNTGAFGPDAVDFAGFYTGADMFPDVAVDAAAAAAGGSAGCSFAFGVDSGY</sequence>